<comment type="function">
    <text evidence="1">Catalyzes the attachment of isoleucine to tRNA(Ile). As IleRS can inadvertently accommodate and process structurally similar amino acids such as valine, to avoid such errors it has two additional distinct tRNA(Ile)-dependent editing activities. One activity is designated as 'pretransfer' editing and involves the hydrolysis of activated Val-AMP. The other activity is designated 'posttransfer' editing and involves deacylation of mischarged Val-tRNA(Ile).</text>
</comment>
<comment type="catalytic activity">
    <reaction evidence="1">
        <text>tRNA(Ile) + L-isoleucine + ATP = L-isoleucyl-tRNA(Ile) + AMP + diphosphate</text>
        <dbReference type="Rhea" id="RHEA:11060"/>
        <dbReference type="Rhea" id="RHEA-COMP:9666"/>
        <dbReference type="Rhea" id="RHEA-COMP:9695"/>
        <dbReference type="ChEBI" id="CHEBI:30616"/>
        <dbReference type="ChEBI" id="CHEBI:33019"/>
        <dbReference type="ChEBI" id="CHEBI:58045"/>
        <dbReference type="ChEBI" id="CHEBI:78442"/>
        <dbReference type="ChEBI" id="CHEBI:78528"/>
        <dbReference type="ChEBI" id="CHEBI:456215"/>
        <dbReference type="EC" id="6.1.1.5"/>
    </reaction>
</comment>
<comment type="cofactor">
    <cofactor evidence="1">
        <name>Zn(2+)</name>
        <dbReference type="ChEBI" id="CHEBI:29105"/>
    </cofactor>
    <text evidence="1">Binds 1 zinc ion per subunit.</text>
</comment>
<comment type="subunit">
    <text evidence="1">Monomer.</text>
</comment>
<comment type="subcellular location">
    <subcellularLocation>
        <location evidence="1">Cytoplasm</location>
    </subcellularLocation>
</comment>
<comment type="domain">
    <text evidence="1">IleRS has two distinct active sites: one for aminoacylation and one for editing. The misactivated valine is translocated from the active site to the editing site, which sterically excludes the correctly activated isoleucine. The single editing site contains two valyl binding pockets, one specific for each substrate (Val-AMP or Val-tRNA(Ile)).</text>
</comment>
<comment type="similarity">
    <text evidence="1">Belongs to the class-I aminoacyl-tRNA synthetase family. IleS type 1 subfamily.</text>
</comment>
<gene>
    <name evidence="1" type="primary">ileS</name>
    <name type="ordered locus">HSM_0054</name>
</gene>
<evidence type="ECO:0000255" key="1">
    <source>
        <dbReference type="HAMAP-Rule" id="MF_02002"/>
    </source>
</evidence>
<dbReference type="EC" id="6.1.1.5" evidence="1"/>
<dbReference type="EMBL" id="CP000947">
    <property type="protein sequence ID" value="ACA32189.1"/>
    <property type="molecule type" value="Genomic_DNA"/>
</dbReference>
<dbReference type="RefSeq" id="WP_012341373.1">
    <property type="nucleotide sequence ID" value="NC_010519.1"/>
</dbReference>
<dbReference type="SMR" id="B0UV12"/>
<dbReference type="STRING" id="228400.HSM_0054"/>
<dbReference type="GeneID" id="31486328"/>
<dbReference type="KEGG" id="hsm:HSM_0054"/>
<dbReference type="HOGENOM" id="CLU_001493_7_0_6"/>
<dbReference type="GO" id="GO:0005829">
    <property type="term" value="C:cytosol"/>
    <property type="evidence" value="ECO:0007669"/>
    <property type="project" value="TreeGrafter"/>
</dbReference>
<dbReference type="GO" id="GO:0002161">
    <property type="term" value="F:aminoacyl-tRNA deacylase activity"/>
    <property type="evidence" value="ECO:0007669"/>
    <property type="project" value="InterPro"/>
</dbReference>
<dbReference type="GO" id="GO:0005524">
    <property type="term" value="F:ATP binding"/>
    <property type="evidence" value="ECO:0007669"/>
    <property type="project" value="UniProtKB-UniRule"/>
</dbReference>
<dbReference type="GO" id="GO:0004822">
    <property type="term" value="F:isoleucine-tRNA ligase activity"/>
    <property type="evidence" value="ECO:0007669"/>
    <property type="project" value="UniProtKB-UniRule"/>
</dbReference>
<dbReference type="GO" id="GO:0000049">
    <property type="term" value="F:tRNA binding"/>
    <property type="evidence" value="ECO:0007669"/>
    <property type="project" value="InterPro"/>
</dbReference>
<dbReference type="GO" id="GO:0008270">
    <property type="term" value="F:zinc ion binding"/>
    <property type="evidence" value="ECO:0007669"/>
    <property type="project" value="UniProtKB-UniRule"/>
</dbReference>
<dbReference type="GO" id="GO:0006428">
    <property type="term" value="P:isoleucyl-tRNA aminoacylation"/>
    <property type="evidence" value="ECO:0007669"/>
    <property type="project" value="UniProtKB-UniRule"/>
</dbReference>
<dbReference type="CDD" id="cd07960">
    <property type="entry name" value="Anticodon_Ia_Ile_BEm"/>
    <property type="match status" value="1"/>
</dbReference>
<dbReference type="CDD" id="cd00818">
    <property type="entry name" value="IleRS_core"/>
    <property type="match status" value="1"/>
</dbReference>
<dbReference type="FunFam" id="1.10.730.20:FF:000001">
    <property type="entry name" value="Isoleucine--tRNA ligase"/>
    <property type="match status" value="1"/>
</dbReference>
<dbReference type="FunFam" id="3.40.50.620:FF:000042">
    <property type="entry name" value="Isoleucine--tRNA ligase"/>
    <property type="match status" value="1"/>
</dbReference>
<dbReference type="FunFam" id="3.40.50.620:FF:000048">
    <property type="entry name" value="Isoleucine--tRNA ligase"/>
    <property type="match status" value="1"/>
</dbReference>
<dbReference type="Gene3D" id="1.10.730.20">
    <property type="match status" value="1"/>
</dbReference>
<dbReference type="Gene3D" id="3.40.50.620">
    <property type="entry name" value="HUPs"/>
    <property type="match status" value="2"/>
</dbReference>
<dbReference type="HAMAP" id="MF_02002">
    <property type="entry name" value="Ile_tRNA_synth_type1"/>
    <property type="match status" value="1"/>
</dbReference>
<dbReference type="InterPro" id="IPR001412">
    <property type="entry name" value="aa-tRNA-synth_I_CS"/>
</dbReference>
<dbReference type="InterPro" id="IPR002300">
    <property type="entry name" value="aa-tRNA-synth_Ia"/>
</dbReference>
<dbReference type="InterPro" id="IPR033708">
    <property type="entry name" value="Anticodon_Ile_BEm"/>
</dbReference>
<dbReference type="InterPro" id="IPR002301">
    <property type="entry name" value="Ile-tRNA-ligase"/>
</dbReference>
<dbReference type="InterPro" id="IPR023585">
    <property type="entry name" value="Ile-tRNA-ligase_type1"/>
</dbReference>
<dbReference type="InterPro" id="IPR050081">
    <property type="entry name" value="Ile-tRNA_ligase"/>
</dbReference>
<dbReference type="InterPro" id="IPR013155">
    <property type="entry name" value="M/V/L/I-tRNA-synth_anticd-bd"/>
</dbReference>
<dbReference type="InterPro" id="IPR014729">
    <property type="entry name" value="Rossmann-like_a/b/a_fold"/>
</dbReference>
<dbReference type="InterPro" id="IPR009080">
    <property type="entry name" value="tRNAsynth_Ia_anticodon-bd"/>
</dbReference>
<dbReference type="InterPro" id="IPR009008">
    <property type="entry name" value="Val/Leu/Ile-tRNA-synth_edit"/>
</dbReference>
<dbReference type="InterPro" id="IPR010663">
    <property type="entry name" value="Znf_FPG/IleRS"/>
</dbReference>
<dbReference type="NCBIfam" id="TIGR00392">
    <property type="entry name" value="ileS"/>
    <property type="match status" value="1"/>
</dbReference>
<dbReference type="PANTHER" id="PTHR42765:SF1">
    <property type="entry name" value="ISOLEUCINE--TRNA LIGASE, MITOCHONDRIAL"/>
    <property type="match status" value="1"/>
</dbReference>
<dbReference type="PANTHER" id="PTHR42765">
    <property type="entry name" value="SOLEUCYL-TRNA SYNTHETASE"/>
    <property type="match status" value="1"/>
</dbReference>
<dbReference type="Pfam" id="PF08264">
    <property type="entry name" value="Anticodon_1"/>
    <property type="match status" value="1"/>
</dbReference>
<dbReference type="Pfam" id="PF00133">
    <property type="entry name" value="tRNA-synt_1"/>
    <property type="match status" value="1"/>
</dbReference>
<dbReference type="Pfam" id="PF06827">
    <property type="entry name" value="zf-FPG_IleRS"/>
    <property type="match status" value="1"/>
</dbReference>
<dbReference type="PRINTS" id="PR00984">
    <property type="entry name" value="TRNASYNTHILE"/>
</dbReference>
<dbReference type="SUPFAM" id="SSF47323">
    <property type="entry name" value="Anticodon-binding domain of a subclass of class I aminoacyl-tRNA synthetases"/>
    <property type="match status" value="1"/>
</dbReference>
<dbReference type="SUPFAM" id="SSF52374">
    <property type="entry name" value="Nucleotidylyl transferase"/>
    <property type="match status" value="1"/>
</dbReference>
<dbReference type="SUPFAM" id="SSF50677">
    <property type="entry name" value="ValRS/IleRS/LeuRS editing domain"/>
    <property type="match status" value="1"/>
</dbReference>
<dbReference type="PROSITE" id="PS00178">
    <property type="entry name" value="AA_TRNA_LIGASE_I"/>
    <property type="match status" value="1"/>
</dbReference>
<protein>
    <recommendedName>
        <fullName evidence="1">Isoleucine--tRNA ligase</fullName>
        <ecNumber evidence="1">6.1.1.5</ecNumber>
    </recommendedName>
    <alternativeName>
        <fullName evidence="1">Isoleucyl-tRNA synthetase</fullName>
        <shortName evidence="1">IleRS</shortName>
    </alternativeName>
</protein>
<accession>B0UV12</accession>
<feature type="chain" id="PRO_1000088547" description="Isoleucine--tRNA ligase">
    <location>
        <begin position="1"/>
        <end position="937"/>
    </location>
</feature>
<feature type="short sequence motif" description="'HIGH' region">
    <location>
        <begin position="58"/>
        <end position="68"/>
    </location>
</feature>
<feature type="short sequence motif" description="'KMSKS' region">
    <location>
        <begin position="602"/>
        <end position="606"/>
    </location>
</feature>
<feature type="binding site" evidence="1">
    <location>
        <position position="561"/>
    </location>
    <ligand>
        <name>L-isoleucyl-5'-AMP</name>
        <dbReference type="ChEBI" id="CHEBI:178002"/>
    </ligand>
</feature>
<feature type="binding site" evidence="1">
    <location>
        <position position="605"/>
    </location>
    <ligand>
        <name>ATP</name>
        <dbReference type="ChEBI" id="CHEBI:30616"/>
    </ligand>
</feature>
<feature type="binding site" evidence="1">
    <location>
        <position position="900"/>
    </location>
    <ligand>
        <name>Zn(2+)</name>
        <dbReference type="ChEBI" id="CHEBI:29105"/>
    </ligand>
</feature>
<feature type="binding site" evidence="1">
    <location>
        <position position="903"/>
    </location>
    <ligand>
        <name>Zn(2+)</name>
        <dbReference type="ChEBI" id="CHEBI:29105"/>
    </ligand>
</feature>
<feature type="binding site" evidence="1">
    <location>
        <position position="920"/>
    </location>
    <ligand>
        <name>Zn(2+)</name>
        <dbReference type="ChEBI" id="CHEBI:29105"/>
    </ligand>
</feature>
<feature type="binding site" evidence="1">
    <location>
        <position position="923"/>
    </location>
    <ligand>
        <name>Zn(2+)</name>
        <dbReference type="ChEBI" id="CHEBI:29105"/>
    </ligand>
</feature>
<proteinExistence type="inferred from homology"/>
<keyword id="KW-0030">Aminoacyl-tRNA synthetase</keyword>
<keyword id="KW-0067">ATP-binding</keyword>
<keyword id="KW-0963">Cytoplasm</keyword>
<keyword id="KW-0436">Ligase</keyword>
<keyword id="KW-0479">Metal-binding</keyword>
<keyword id="KW-0547">Nucleotide-binding</keyword>
<keyword id="KW-0648">Protein biosynthesis</keyword>
<keyword id="KW-0862">Zinc</keyword>
<reference key="1">
    <citation type="submission" date="2008-02" db="EMBL/GenBank/DDBJ databases">
        <title>Complete sequence of Haemophilus somnus 2336.</title>
        <authorList>
            <consortium name="US DOE Joint Genome Institute"/>
            <person name="Siddaramappa S."/>
            <person name="Duncan A.J."/>
            <person name="Challacombe J.F."/>
            <person name="Rainey D."/>
            <person name="Gillaspy A.F."/>
            <person name="Carson M."/>
            <person name="Gipson J."/>
            <person name="Gipson M."/>
            <person name="Bruce D."/>
            <person name="Detter J.C."/>
            <person name="Han C.S."/>
            <person name="Land M."/>
            <person name="Tapia R."/>
            <person name="Thompson L.S."/>
            <person name="Orvis J."/>
            <person name="Zaitshik J."/>
            <person name="Barnes G."/>
            <person name="Brettin T.S."/>
            <person name="Dyer D.W."/>
            <person name="Inzana T.J."/>
        </authorList>
    </citation>
    <scope>NUCLEOTIDE SEQUENCE [LARGE SCALE GENOMIC DNA]</scope>
    <source>
        <strain>2336</strain>
    </source>
</reference>
<name>SYI_HISS2</name>
<organism>
    <name type="scientific">Histophilus somni (strain 2336)</name>
    <name type="common">Haemophilus somnus</name>
    <dbReference type="NCBI Taxonomy" id="228400"/>
    <lineage>
        <taxon>Bacteria</taxon>
        <taxon>Pseudomonadati</taxon>
        <taxon>Pseudomonadota</taxon>
        <taxon>Gammaproteobacteria</taxon>
        <taxon>Pasteurellales</taxon>
        <taxon>Pasteurellaceae</taxon>
        <taxon>Histophilus</taxon>
    </lineage>
</organism>
<sequence>MTDYKNTLNLPETGFPMRGDLAKREPDMLKNWYDKNLYQKVREASKGKKTFILHDGPPYANGTLHLGHAVNKILKDIIMKSKTALGFDTPYVPGWDCHGLPIELKVEGLVGKPNEKISAAEFRQACRDYAKEQVEGQKADFIRMGVLGDWDNPYLTMNFETEAEIIRTLGKVIQNGHLYKGSKPVHWCLDCASSLAEAEVEYEDKVSPSIYVRFAAVSAAEVEEKFNALGKGQGALSAVIWTTTPWTLPSNRAIAVNAELEYQLVQLGDERVILAAELVQAVQNALKIEQLEILGSTTGQDLELVRFHHPFYDFSVPIILGDHVTVDGGTGLVHTAPDHGQDDFVVSKKYGLEMAGLVANDGKFISSTPFFAGKGVFEANDLVLEKLKETGALLKLERIKHSYPHCWRHKTPIIFRATPQWFIGMETQDLRIKALSEIKSVRWIPSWGEARIDKMVANRPDWCISRQRTWGVPMTMFVHNETEELHPRTLELLEDIAKRVEKAGIQAWWDLDPAELLGEDAKTYHKVPDTLDVWFDSGSTYASVVEQRPEFNGKSTDMYLEGSDQHRGWFMSSLMLSTATNNKAPYKQVLTHGFTVDEKGRKMSKSLGNVIVPSEVWNKNGADILRLWVASTDYTGEIAVSHKILNSAGDTYRRIRNTARFLLANLNGFDPKNDLVNPEEMISLDRWAVSCALEAQNEIKEAYDNYQFHTVVQRLMRFCSIEMGSFYLDIIKDRQYTTKADSLARRSCQTALWHISEALVRWIAPILSFTADEIWGYLPKLDNRAEFVFTEEFYDGLFGLDESDKLDDTYWQQLLKVRAEVNRVLEQARNDKLIGAGLEAKVTVYASEEIRPLLEQLGNELRFVLITSQVVVKPLSKADVAESELTGLAIKVERADGEKCPRCWHFSTDIGSNKEHSHICGRCIENVEGNGEQRQFA</sequence>